<comment type="function">
    <text evidence="3 4 5 6 7 8 11">Involved in pre-mRNA splicing as component of the spliceosome (PubMed:11991638, PubMed:27035939, PubMed:28076346, PubMed:28502770, PubMed:28781166, PubMed:32494006). Associated with sn-RNP U2, where it contributes to the binding of stem loop IV of U2 snRNA (PubMed:27035939, PubMed:32494006, PubMed:9716128).</text>
</comment>
<comment type="subunit">
    <text evidence="2 3 4 5 6 7 8 9 10 11">Identified in the spliceosome B complex (PubMed:28781166, PubMed:32494006, PubMed:36797247). Identified in the spliceosome C complex (PubMed:11991638, PubMed:28076346, PubMed:28502770, PubMed:32494006, PubMed:36797247). Found in a pre-mRNA splicing complex with SFRS4, SFRS5, SNRNP70, SNRPA1, SRRM1 and SRRM2 (PubMed:9531537). Found in a pre-mRNA exonic splicing enhancer (ESE) complex with SNRNP70, SNRPA1, SRRM1 and TRA2B (PubMed:10339552). Contributes to the binding of stem loop IV of U2 snRNA with SNRPB2 (PubMed:27035939, PubMed:9716128).</text>
</comment>
<comment type="interaction">
    <interactant intactId="EBI-876439">
        <id>P09661</id>
    </interactant>
    <interactant intactId="EBI-11522367">
        <id>Q13422-7</id>
        <label>IKZF1</label>
    </interactant>
    <organismsDiffer>false</organismsDiffer>
    <experiments>3</experiments>
</comment>
<comment type="interaction">
    <interactant intactId="EBI-876439">
        <id>P09661</id>
    </interactant>
    <interactant intactId="EBI-2557660">
        <id>Q9ULR0</id>
        <label>ISY1</label>
    </interactant>
    <organismsDiffer>false</organismsDiffer>
    <experiments>4</experiments>
</comment>
<comment type="interaction">
    <interactant intactId="EBI-876439">
        <id>P09661</id>
    </interactant>
    <interactant intactId="EBI-79165">
        <id>Q9NRD5</id>
        <label>PICK1</label>
    </interactant>
    <organismsDiffer>false</organismsDiffer>
    <experiments>3</experiments>
</comment>
<comment type="interaction">
    <interactant intactId="EBI-876439">
        <id>P09661</id>
    </interactant>
    <interactant intactId="EBI-2462271">
        <id>Q15428</id>
        <label>SF3A2</label>
    </interactant>
    <organismsDiffer>false</organismsDiffer>
    <experiments>6</experiments>
</comment>
<comment type="interaction">
    <interactant intactId="EBI-876439">
        <id>P09661</id>
    </interactant>
    <interactant intactId="EBI-607085">
        <id>P09012</id>
        <label>SNRPA</label>
    </interactant>
    <organismsDiffer>false</organismsDiffer>
    <experiments>10</experiments>
</comment>
<comment type="interaction">
    <interactant intactId="EBI-876439">
        <id>P09661</id>
    </interactant>
    <interactant intactId="EBI-1053651">
        <id>P08579</id>
        <label>SNRPB2</label>
    </interactant>
    <organismsDiffer>false</organismsDiffer>
    <experiments>10</experiments>
</comment>
<comment type="interaction">
    <interactant intactId="EBI-876439">
        <id>P09661</id>
    </interactant>
    <interactant intactId="EBI-356900">
        <id>P62306</id>
        <label>SNRPF</label>
    </interactant>
    <organismsDiffer>false</organismsDiffer>
    <experiments>5</experiments>
</comment>
<comment type="interaction">
    <interactant intactId="EBI-876439">
        <id>P09661</id>
    </interactant>
    <interactant intactId="EBI-295232">
        <id>Q9HCS7</id>
        <label>XAB2</label>
    </interactant>
    <organismsDiffer>false</organismsDiffer>
    <experiments>5</experiments>
</comment>
<comment type="interaction">
    <interactant intactId="EBI-876439">
        <id>P09661</id>
    </interactant>
    <interactant intactId="EBI-10183064">
        <id>Q8N5A5-2</id>
        <label>ZGPAT</label>
    </interactant>
    <organismsDiffer>false</organismsDiffer>
    <experiments>3</experiments>
</comment>
<comment type="subcellular location">
    <subcellularLocation>
        <location evidence="3 5 6 7">Nucleus</location>
    </subcellularLocation>
</comment>
<comment type="similarity">
    <text evidence="15">Belongs to the U2 small nuclear ribonucleoprotein A family.</text>
</comment>
<evidence type="ECO:0000256" key="1">
    <source>
        <dbReference type="SAM" id="MobiDB-lite"/>
    </source>
</evidence>
<evidence type="ECO:0000269" key="2">
    <source>
    </source>
</evidence>
<evidence type="ECO:0000269" key="3">
    <source>
    </source>
</evidence>
<evidence type="ECO:0000269" key="4">
    <source>
    </source>
</evidence>
<evidence type="ECO:0000269" key="5">
    <source>
    </source>
</evidence>
<evidence type="ECO:0000269" key="6">
    <source>
    </source>
</evidence>
<evidence type="ECO:0000269" key="7">
    <source>
    </source>
</evidence>
<evidence type="ECO:0000269" key="8">
    <source>
    </source>
</evidence>
<evidence type="ECO:0000269" key="9">
    <source>
    </source>
</evidence>
<evidence type="ECO:0000269" key="10">
    <source>
    </source>
</evidence>
<evidence type="ECO:0000269" key="11">
    <source>
    </source>
</evidence>
<evidence type="ECO:0000269" key="12">
    <source ref="5"/>
</evidence>
<evidence type="ECO:0000303" key="13">
    <source>
    </source>
</evidence>
<evidence type="ECO:0000303" key="14">
    <source>
    </source>
</evidence>
<evidence type="ECO:0000305" key="15"/>
<evidence type="ECO:0007744" key="16">
    <source>
        <dbReference type="PDB" id="5MQF"/>
    </source>
</evidence>
<evidence type="ECO:0007744" key="17">
    <source>
        <dbReference type="PDB" id="5O9Z"/>
    </source>
</evidence>
<evidence type="ECO:0007744" key="18">
    <source>
        <dbReference type="PDB" id="5XJC"/>
    </source>
</evidence>
<evidence type="ECO:0007744" key="19">
    <source>
        <dbReference type="PDB" id="6Y5Q"/>
    </source>
</evidence>
<evidence type="ECO:0007744" key="20">
    <source>
        <dbReference type="PDB" id="8HK1"/>
    </source>
</evidence>
<evidence type="ECO:0007744" key="21">
    <source>
    </source>
</evidence>
<evidence type="ECO:0007744" key="22">
    <source>
    </source>
</evidence>
<evidence type="ECO:0007744" key="23">
    <source>
    </source>
</evidence>
<evidence type="ECO:0007744" key="24">
    <source>
    </source>
</evidence>
<evidence type="ECO:0007744" key="25">
    <source>
    </source>
</evidence>
<evidence type="ECO:0007744" key="26">
    <source>
    </source>
</evidence>
<evidence type="ECO:0007744" key="27">
    <source>
    </source>
</evidence>
<evidence type="ECO:0007829" key="28">
    <source>
        <dbReference type="PDB" id="1A9N"/>
    </source>
</evidence>
<name>RU2A_HUMAN</name>
<accession>P09661</accession>
<accession>B2R5I6</accession>
<accession>Q8TBD2</accession>
<feature type="initiator methionine" description="Removed" evidence="12">
    <location>
        <position position="1"/>
    </location>
</feature>
<feature type="chain" id="PRO_0000074173" description="U2 small nuclear ribonucleoprotein A'">
    <location>
        <begin position="2"/>
        <end position="255"/>
    </location>
</feature>
<feature type="repeat" description="LRR 1">
    <location>
        <begin position="20"/>
        <end position="41"/>
    </location>
</feature>
<feature type="repeat" description="LRR 2">
    <location>
        <begin position="43"/>
        <end position="64"/>
    </location>
</feature>
<feature type="repeat" description="LRR 3">
    <location>
        <begin position="65"/>
        <end position="86"/>
    </location>
</feature>
<feature type="repeat" description="LRR 4">
    <location>
        <begin position="89"/>
        <end position="110"/>
    </location>
</feature>
<feature type="domain" description="LRRCT">
    <location>
        <begin position="123"/>
        <end position="161"/>
    </location>
</feature>
<feature type="region of interest" description="Disordered" evidence="1">
    <location>
        <begin position="174"/>
        <end position="201"/>
    </location>
</feature>
<feature type="region of interest" description="Disordered" evidence="1">
    <location>
        <begin position="222"/>
        <end position="255"/>
    </location>
</feature>
<feature type="compositionally biased region" description="Acidic residues" evidence="1">
    <location>
        <begin position="240"/>
        <end position="255"/>
    </location>
</feature>
<feature type="modified residue" description="N6-acetyllysine; alternate" evidence="23">
    <location>
        <position position="172"/>
    </location>
</feature>
<feature type="modified residue" description="Phosphoserine" evidence="21">
    <location>
        <position position="178"/>
    </location>
</feature>
<feature type="modified residue" description="Phosphoserine" evidence="22 24 25 26">
    <location>
        <position position="197"/>
    </location>
</feature>
<feature type="modified residue" description="Phosphoserine" evidence="26">
    <location>
        <position position="236"/>
    </location>
</feature>
<feature type="modified residue" description="Phosphoserine" evidence="26">
    <location>
        <position position="255"/>
    </location>
</feature>
<feature type="cross-link" description="Glycyl lysine isopeptide (Lys-Gly) (interchain with G-Cter in SUMO2); alternate" evidence="27">
    <location>
        <position position="172"/>
    </location>
</feature>
<feature type="cross-link" description="Glycyl lysine isopeptide (Lys-Gly) (interchain with G-Cter in SUMO2)" evidence="27">
    <location>
        <position position="221"/>
    </location>
</feature>
<feature type="mutagenesis site" description="Results in defective spliceosome assembly." evidence="4">
    <original>Y</original>
    <variation>D</variation>
    <location>
        <position position="15"/>
    </location>
</feature>
<feature type="mutagenesis site" description="No change in spliceosome assembly." evidence="4">
    <original>R</original>
    <variation>Q</variation>
    <location>
        <position position="27"/>
    </location>
</feature>
<feature type="mutagenesis site" description="No change in spliceosome assembly." evidence="4">
    <original>T</original>
    <variation>K</variation>
    <location>
        <position position="68"/>
    </location>
</feature>
<feature type="mutagenesis site" description="No change in spliceosome assembly." evidence="4">
    <original>N</original>
    <variation>K</variation>
    <location>
        <position position="72"/>
    </location>
</feature>
<feature type="mutagenesis site" description="No change in spliceosome assembly." evidence="4">
    <original>N</original>
    <variation>K</variation>
    <location>
        <position position="73"/>
    </location>
</feature>
<feature type="mutagenesis site" description="Results in defective spliceosome assembly." evidence="4">
    <original>E</original>
    <variation>V</variation>
    <location>
        <position position="92"/>
    </location>
</feature>
<feature type="mutagenesis site" description="Results in defective spliceosome assembly." evidence="4">
    <original>Q</original>
    <variation>R</variation>
    <location>
        <position position="148"/>
    </location>
</feature>
<feature type="sequence conflict" description="In Ref. 1; CAA31838." evidence="15" ref="1">
    <original>K</original>
    <variation>R</variation>
    <location>
        <position position="193"/>
    </location>
</feature>
<feature type="helix" evidence="28">
    <location>
        <begin position="6"/>
        <end position="10"/>
    </location>
</feature>
<feature type="strand" evidence="28">
    <location>
        <begin position="14"/>
        <end position="16"/>
    </location>
</feature>
<feature type="strand" evidence="28">
    <location>
        <begin position="22"/>
        <end position="25"/>
    </location>
</feature>
<feature type="helix" evidence="28">
    <location>
        <begin position="37"/>
        <end position="40"/>
    </location>
</feature>
<feature type="strand" evidence="28">
    <location>
        <begin position="45"/>
        <end position="48"/>
    </location>
</feature>
<feature type="strand" evidence="28">
    <location>
        <begin position="68"/>
        <end position="70"/>
    </location>
</feature>
<feature type="helix" evidence="28">
    <location>
        <begin position="83"/>
        <end position="86"/>
    </location>
</feature>
<feature type="strand" evidence="28">
    <location>
        <begin position="92"/>
        <end position="94"/>
    </location>
</feature>
<feature type="helix" evidence="28">
    <location>
        <begin position="103"/>
        <end position="111"/>
    </location>
</feature>
<feature type="strand" evidence="28">
    <location>
        <begin position="117"/>
        <end position="119"/>
    </location>
</feature>
<feature type="helix" evidence="28">
    <location>
        <begin position="124"/>
        <end position="127"/>
    </location>
</feature>
<feature type="helix" evidence="28">
    <location>
        <begin position="131"/>
        <end position="138"/>
    </location>
</feature>
<feature type="strand" evidence="28">
    <location>
        <begin position="143"/>
        <end position="145"/>
    </location>
</feature>
<feature type="helix" evidence="28">
    <location>
        <begin position="152"/>
        <end position="160"/>
    </location>
</feature>
<feature type="helix" evidence="28">
    <location>
        <begin position="165"/>
        <end position="172"/>
    </location>
</feature>
<organism>
    <name type="scientific">Homo sapiens</name>
    <name type="common">Human</name>
    <dbReference type="NCBI Taxonomy" id="9606"/>
    <lineage>
        <taxon>Eukaryota</taxon>
        <taxon>Metazoa</taxon>
        <taxon>Chordata</taxon>
        <taxon>Craniata</taxon>
        <taxon>Vertebrata</taxon>
        <taxon>Euteleostomi</taxon>
        <taxon>Mammalia</taxon>
        <taxon>Eutheria</taxon>
        <taxon>Euarchontoglires</taxon>
        <taxon>Primates</taxon>
        <taxon>Haplorrhini</taxon>
        <taxon>Catarrhini</taxon>
        <taxon>Hominidae</taxon>
        <taxon>Homo</taxon>
    </lineage>
</organism>
<gene>
    <name type="primary">SNRPA1</name>
</gene>
<protein>
    <recommendedName>
        <fullName>U2 small nuclear ribonucleoprotein A'</fullName>
        <shortName evidence="13 14">U2 snRNP A'</shortName>
    </recommendedName>
</protein>
<reference key="1">
    <citation type="journal article" date="1989" name="Nucleic Acids Res.">
        <title>Molecular cloning of the cDNA for the human U2 snRNA-specific A' protein.</title>
        <authorList>
            <person name="Sillekens P.T.G."/>
            <person name="Beijer R.P."/>
            <person name="Habets W.J."/>
            <person name="van Venrooij W.J."/>
        </authorList>
    </citation>
    <scope>NUCLEOTIDE SEQUENCE [MRNA]</scope>
</reference>
<reference key="2">
    <citation type="journal article" date="2004" name="Nat. Genet.">
        <title>Complete sequencing and characterization of 21,243 full-length human cDNAs.</title>
        <authorList>
            <person name="Ota T."/>
            <person name="Suzuki Y."/>
            <person name="Nishikawa T."/>
            <person name="Otsuki T."/>
            <person name="Sugiyama T."/>
            <person name="Irie R."/>
            <person name="Wakamatsu A."/>
            <person name="Hayashi K."/>
            <person name="Sato H."/>
            <person name="Nagai K."/>
            <person name="Kimura K."/>
            <person name="Makita H."/>
            <person name="Sekine M."/>
            <person name="Obayashi M."/>
            <person name="Nishi T."/>
            <person name="Shibahara T."/>
            <person name="Tanaka T."/>
            <person name="Ishii S."/>
            <person name="Yamamoto J."/>
            <person name="Saito K."/>
            <person name="Kawai Y."/>
            <person name="Isono Y."/>
            <person name="Nakamura Y."/>
            <person name="Nagahari K."/>
            <person name="Murakami K."/>
            <person name="Yasuda T."/>
            <person name="Iwayanagi T."/>
            <person name="Wagatsuma M."/>
            <person name="Shiratori A."/>
            <person name="Sudo H."/>
            <person name="Hosoiri T."/>
            <person name="Kaku Y."/>
            <person name="Kodaira H."/>
            <person name="Kondo H."/>
            <person name="Sugawara M."/>
            <person name="Takahashi M."/>
            <person name="Kanda K."/>
            <person name="Yokoi T."/>
            <person name="Furuya T."/>
            <person name="Kikkawa E."/>
            <person name="Omura Y."/>
            <person name="Abe K."/>
            <person name="Kamihara K."/>
            <person name="Katsuta N."/>
            <person name="Sato K."/>
            <person name="Tanikawa M."/>
            <person name="Yamazaki M."/>
            <person name="Ninomiya K."/>
            <person name="Ishibashi T."/>
            <person name="Yamashita H."/>
            <person name="Murakawa K."/>
            <person name="Fujimori K."/>
            <person name="Tanai H."/>
            <person name="Kimata M."/>
            <person name="Watanabe M."/>
            <person name="Hiraoka S."/>
            <person name="Chiba Y."/>
            <person name="Ishida S."/>
            <person name="Ono Y."/>
            <person name="Takiguchi S."/>
            <person name="Watanabe S."/>
            <person name="Yosida M."/>
            <person name="Hotuta T."/>
            <person name="Kusano J."/>
            <person name="Kanehori K."/>
            <person name="Takahashi-Fujii A."/>
            <person name="Hara H."/>
            <person name="Tanase T.-O."/>
            <person name="Nomura Y."/>
            <person name="Togiya S."/>
            <person name="Komai F."/>
            <person name="Hara R."/>
            <person name="Takeuchi K."/>
            <person name="Arita M."/>
            <person name="Imose N."/>
            <person name="Musashino K."/>
            <person name="Yuuki H."/>
            <person name="Oshima A."/>
            <person name="Sasaki N."/>
            <person name="Aotsuka S."/>
            <person name="Yoshikawa Y."/>
            <person name="Matsunawa H."/>
            <person name="Ichihara T."/>
            <person name="Shiohata N."/>
            <person name="Sano S."/>
            <person name="Moriya S."/>
            <person name="Momiyama H."/>
            <person name="Satoh N."/>
            <person name="Takami S."/>
            <person name="Terashima Y."/>
            <person name="Suzuki O."/>
            <person name="Nakagawa S."/>
            <person name="Senoh A."/>
            <person name="Mizoguchi H."/>
            <person name="Goto Y."/>
            <person name="Shimizu F."/>
            <person name="Wakebe H."/>
            <person name="Hishigaki H."/>
            <person name="Watanabe T."/>
            <person name="Sugiyama A."/>
            <person name="Takemoto M."/>
            <person name="Kawakami B."/>
            <person name="Yamazaki M."/>
            <person name="Watanabe K."/>
            <person name="Kumagai A."/>
            <person name="Itakura S."/>
            <person name="Fukuzumi Y."/>
            <person name="Fujimori Y."/>
            <person name="Komiyama M."/>
            <person name="Tashiro H."/>
            <person name="Tanigami A."/>
            <person name="Fujiwara T."/>
            <person name="Ono T."/>
            <person name="Yamada K."/>
            <person name="Fujii Y."/>
            <person name="Ozaki K."/>
            <person name="Hirao M."/>
            <person name="Ohmori Y."/>
            <person name="Kawabata A."/>
            <person name="Hikiji T."/>
            <person name="Kobatake N."/>
            <person name="Inagaki H."/>
            <person name="Ikema Y."/>
            <person name="Okamoto S."/>
            <person name="Okitani R."/>
            <person name="Kawakami T."/>
            <person name="Noguchi S."/>
            <person name="Itoh T."/>
            <person name="Shigeta K."/>
            <person name="Senba T."/>
            <person name="Matsumura K."/>
            <person name="Nakajima Y."/>
            <person name="Mizuno T."/>
            <person name="Morinaga M."/>
            <person name="Sasaki M."/>
            <person name="Togashi T."/>
            <person name="Oyama M."/>
            <person name="Hata H."/>
            <person name="Watanabe M."/>
            <person name="Komatsu T."/>
            <person name="Mizushima-Sugano J."/>
            <person name="Satoh T."/>
            <person name="Shirai Y."/>
            <person name="Takahashi Y."/>
            <person name="Nakagawa K."/>
            <person name="Okumura K."/>
            <person name="Nagase T."/>
            <person name="Nomura N."/>
            <person name="Kikuchi H."/>
            <person name="Masuho Y."/>
            <person name="Yamashita R."/>
            <person name="Nakai K."/>
            <person name="Yada T."/>
            <person name="Nakamura Y."/>
            <person name="Ohara O."/>
            <person name="Isogai T."/>
            <person name="Sugano S."/>
        </authorList>
    </citation>
    <scope>NUCLEOTIDE SEQUENCE [LARGE SCALE MRNA]</scope>
    <source>
        <tissue>Skeletal muscle</tissue>
    </source>
</reference>
<reference key="3">
    <citation type="submission" date="2005-07" db="EMBL/GenBank/DDBJ databases">
        <authorList>
            <person name="Mural R.J."/>
            <person name="Istrail S."/>
            <person name="Sutton G.G."/>
            <person name="Florea L."/>
            <person name="Halpern A.L."/>
            <person name="Mobarry C.M."/>
            <person name="Lippert R."/>
            <person name="Walenz B."/>
            <person name="Shatkay H."/>
            <person name="Dew I."/>
            <person name="Miller J.R."/>
            <person name="Flanigan M.J."/>
            <person name="Edwards N.J."/>
            <person name="Bolanos R."/>
            <person name="Fasulo D."/>
            <person name="Halldorsson B.V."/>
            <person name="Hannenhalli S."/>
            <person name="Turner R."/>
            <person name="Yooseph S."/>
            <person name="Lu F."/>
            <person name="Nusskern D.R."/>
            <person name="Shue B.C."/>
            <person name="Zheng X.H."/>
            <person name="Zhong F."/>
            <person name="Delcher A.L."/>
            <person name="Huson D.H."/>
            <person name="Kravitz S.A."/>
            <person name="Mouchard L."/>
            <person name="Reinert K."/>
            <person name="Remington K.A."/>
            <person name="Clark A.G."/>
            <person name="Waterman M.S."/>
            <person name="Eichler E.E."/>
            <person name="Adams M.D."/>
            <person name="Hunkapiller M.W."/>
            <person name="Myers E.W."/>
            <person name="Venter J.C."/>
        </authorList>
    </citation>
    <scope>NUCLEOTIDE SEQUENCE [LARGE SCALE GENOMIC DNA]</scope>
</reference>
<reference key="4">
    <citation type="journal article" date="2004" name="Genome Res.">
        <title>The status, quality, and expansion of the NIH full-length cDNA project: the Mammalian Gene Collection (MGC).</title>
        <authorList>
            <consortium name="The MGC Project Team"/>
        </authorList>
    </citation>
    <scope>NUCLEOTIDE SEQUENCE [LARGE SCALE MRNA]</scope>
    <source>
        <tissue>Muscle</tissue>
        <tissue>Urinary bladder</tissue>
    </source>
</reference>
<reference key="5">
    <citation type="submission" date="2008-03" db="UniProtKB">
        <authorList>
            <person name="Bienvenut W.V."/>
            <person name="Heiserich L."/>
            <person name="Gottlieb E."/>
        </authorList>
    </citation>
    <scope>PROTEIN SEQUENCE OF 2-20; 114-122; 133-143 AND 222-232</scope>
    <scope>CLEAVAGE OF INITIATOR METHIONINE</scope>
    <scope>IDENTIFICATION BY MASS SPECTROMETRY</scope>
    <source>
        <tissue>Colon carcinoma</tissue>
    </source>
</reference>
<reference key="6">
    <citation type="journal article" date="1998" name="Genes Dev.">
        <title>A coactivator of pre-mRNA splicing.</title>
        <authorList>
            <person name="Blencowe B.J."/>
            <person name="Issner R."/>
            <person name="Nickerson J.A."/>
            <person name="Sharp P.A."/>
        </authorList>
    </citation>
    <scope>IDENTIFICATION IN A MRNA SPLICING COMPLEX WITH SFRS4; SFRS5; SNRNP70; SRRM1 AND SRRM2</scope>
</reference>
<reference key="7">
    <citation type="journal article" date="1999" name="Proc. Natl. Acad. Sci. U.S.A.">
        <title>The SRm160/300 splicing coactivator is required for exon-enhancer function.</title>
        <authorList>
            <person name="Eldridge A.G."/>
            <person name="Li Y."/>
            <person name="Sharp P.A."/>
            <person name="Blencowe B.J."/>
        </authorList>
    </citation>
    <scope>IDENTIFICATION IN A MRNA EXONIC SPLICING ENHANCER (ESE) COMPLEX WITH SNRNP70; SRRM1 AND TRA2B</scope>
</reference>
<reference key="8">
    <citation type="journal article" date="2002" name="RNA">
        <title>Purification and characterization of native spliceosomes suitable for three-dimensional structural analysis.</title>
        <authorList>
            <person name="Jurica M.S."/>
            <person name="Licklider L.J."/>
            <person name="Gygi S.P."/>
            <person name="Grigorieff N."/>
            <person name="Moore M.J."/>
        </authorList>
    </citation>
    <scope>IDENTIFICATION BY MASS SPECTROMETRY</scope>
    <scope>IDENTIFICATION IN THE SPLICEOSOMAL C COMPLEX</scope>
    <scope>FUNCTION</scope>
    <scope>SUBCELLULAR LOCATION</scope>
    <scope>SUBUNIT</scope>
</reference>
<reference key="9">
    <citation type="journal article" date="2008" name="Proc. Natl. Acad. Sci. U.S.A.">
        <title>A quantitative atlas of mitotic phosphorylation.</title>
        <authorList>
            <person name="Dephoure N."/>
            <person name="Zhou C."/>
            <person name="Villen J."/>
            <person name="Beausoleil S.A."/>
            <person name="Bakalarski C.E."/>
            <person name="Elledge S.J."/>
            <person name="Gygi S.P."/>
        </authorList>
    </citation>
    <scope>PHOSPHORYLATION [LARGE SCALE ANALYSIS] AT SER-178</scope>
    <scope>IDENTIFICATION BY MASS SPECTROMETRY [LARGE SCALE ANALYSIS]</scope>
    <source>
        <tissue>Cervix carcinoma</tissue>
    </source>
</reference>
<reference key="10">
    <citation type="journal article" date="2009" name="Mol. Cell. Proteomics">
        <title>Large-scale proteomics analysis of the human kinome.</title>
        <authorList>
            <person name="Oppermann F.S."/>
            <person name="Gnad F."/>
            <person name="Olsen J.V."/>
            <person name="Hornberger R."/>
            <person name="Greff Z."/>
            <person name="Keri G."/>
            <person name="Mann M."/>
            <person name="Daub H."/>
        </authorList>
    </citation>
    <scope>PHOSPHORYLATION [LARGE SCALE ANALYSIS] AT SER-197</scope>
    <scope>IDENTIFICATION BY MASS SPECTROMETRY [LARGE SCALE ANALYSIS]</scope>
</reference>
<reference key="11">
    <citation type="journal article" date="2009" name="Sci. Signal.">
        <title>Quantitative phosphoproteomic analysis of T cell receptor signaling reveals system-wide modulation of protein-protein interactions.</title>
        <authorList>
            <person name="Mayya V."/>
            <person name="Lundgren D.H."/>
            <person name="Hwang S.-I."/>
            <person name="Rezaul K."/>
            <person name="Wu L."/>
            <person name="Eng J.K."/>
            <person name="Rodionov V."/>
            <person name="Han D.K."/>
        </authorList>
    </citation>
    <scope>PHOSPHORYLATION [LARGE SCALE ANALYSIS] AT SER-197</scope>
    <scope>IDENTIFICATION BY MASS SPECTROMETRY [LARGE SCALE ANALYSIS]</scope>
    <source>
        <tissue>Leukemic T-cell</tissue>
    </source>
</reference>
<reference key="12">
    <citation type="journal article" date="2009" name="Science">
        <title>Lysine acetylation targets protein complexes and co-regulates major cellular functions.</title>
        <authorList>
            <person name="Choudhary C."/>
            <person name="Kumar C."/>
            <person name="Gnad F."/>
            <person name="Nielsen M.L."/>
            <person name="Rehman M."/>
            <person name="Walther T.C."/>
            <person name="Olsen J.V."/>
            <person name="Mann M."/>
        </authorList>
    </citation>
    <scope>ACETYLATION [LARGE SCALE ANALYSIS] AT LYS-172</scope>
    <scope>IDENTIFICATION BY MASS SPECTROMETRY [LARGE SCALE ANALYSIS]</scope>
</reference>
<reference key="13">
    <citation type="journal article" date="2010" name="Sci. Signal.">
        <title>Quantitative phosphoproteomics reveals widespread full phosphorylation site occupancy during mitosis.</title>
        <authorList>
            <person name="Olsen J.V."/>
            <person name="Vermeulen M."/>
            <person name="Santamaria A."/>
            <person name="Kumar C."/>
            <person name="Miller M.L."/>
            <person name="Jensen L.J."/>
            <person name="Gnad F."/>
            <person name="Cox J."/>
            <person name="Jensen T.S."/>
            <person name="Nigg E.A."/>
            <person name="Brunak S."/>
            <person name="Mann M."/>
        </authorList>
    </citation>
    <scope>PHOSPHORYLATION [LARGE SCALE ANALYSIS] AT SER-197</scope>
    <scope>IDENTIFICATION BY MASS SPECTROMETRY [LARGE SCALE ANALYSIS]</scope>
    <source>
        <tissue>Cervix carcinoma</tissue>
    </source>
</reference>
<reference key="14">
    <citation type="journal article" date="2011" name="BMC Syst. Biol.">
        <title>Initial characterization of the human central proteome.</title>
        <authorList>
            <person name="Burkard T.R."/>
            <person name="Planyavsky M."/>
            <person name="Kaupe I."/>
            <person name="Breitwieser F.P."/>
            <person name="Buerckstuemmer T."/>
            <person name="Bennett K.L."/>
            <person name="Superti-Furga G."/>
            <person name="Colinge J."/>
        </authorList>
    </citation>
    <scope>IDENTIFICATION BY MASS SPECTROMETRY [LARGE SCALE ANALYSIS]</scope>
</reference>
<reference key="15">
    <citation type="journal article" date="2012" name="Proc. Natl. Acad. Sci. U.S.A.">
        <title>N-terminal acetylome analyses and functional insights of the N-terminal acetyltransferase NatB.</title>
        <authorList>
            <person name="Van Damme P."/>
            <person name="Lasa M."/>
            <person name="Polevoda B."/>
            <person name="Gazquez C."/>
            <person name="Elosegui-Artola A."/>
            <person name="Kim D.S."/>
            <person name="De Juan-Pardo E."/>
            <person name="Demeyer K."/>
            <person name="Hole K."/>
            <person name="Larrea E."/>
            <person name="Timmerman E."/>
            <person name="Prieto J."/>
            <person name="Arnesen T."/>
            <person name="Sherman F."/>
            <person name="Gevaert K."/>
            <person name="Aldabe R."/>
        </authorList>
    </citation>
    <scope>IDENTIFICATION BY MASS SPECTROMETRY [LARGE SCALE ANALYSIS]</scope>
</reference>
<reference key="16">
    <citation type="journal article" date="2013" name="J. Proteome Res.">
        <title>Toward a comprehensive characterization of a human cancer cell phosphoproteome.</title>
        <authorList>
            <person name="Zhou H."/>
            <person name="Di Palma S."/>
            <person name="Preisinger C."/>
            <person name="Peng M."/>
            <person name="Polat A.N."/>
            <person name="Heck A.J."/>
            <person name="Mohammed S."/>
        </authorList>
    </citation>
    <scope>PHOSPHORYLATION [LARGE SCALE ANALYSIS] AT SER-197; SER-236 AND SER-255</scope>
    <scope>IDENTIFICATION BY MASS SPECTROMETRY [LARGE SCALE ANALYSIS]</scope>
    <source>
        <tissue>Cervix carcinoma</tissue>
        <tissue>Erythroleukemia</tissue>
    </source>
</reference>
<reference key="17">
    <citation type="journal article" date="2014" name="J. Proteomics">
        <title>An enzyme assisted RP-RPLC approach for in-depth analysis of human liver phosphoproteome.</title>
        <authorList>
            <person name="Bian Y."/>
            <person name="Song C."/>
            <person name="Cheng K."/>
            <person name="Dong M."/>
            <person name="Wang F."/>
            <person name="Huang J."/>
            <person name="Sun D."/>
            <person name="Wang L."/>
            <person name="Ye M."/>
            <person name="Zou H."/>
        </authorList>
    </citation>
    <scope>IDENTIFICATION BY MASS SPECTROMETRY [LARGE SCALE ANALYSIS]</scope>
    <source>
        <tissue>Liver</tissue>
    </source>
</reference>
<reference key="18">
    <citation type="journal article" date="2017" name="Nat. Struct. Mol. Biol.">
        <title>Site-specific mapping of the human SUMO proteome reveals co-modification with phosphorylation.</title>
        <authorList>
            <person name="Hendriks I.A."/>
            <person name="Lyon D."/>
            <person name="Young C."/>
            <person name="Jensen L.J."/>
            <person name="Vertegaal A.C."/>
            <person name="Nielsen M.L."/>
        </authorList>
    </citation>
    <scope>SUMOYLATION [LARGE SCALE ANALYSIS] AT LYS-172 AND LYS-221</scope>
    <scope>IDENTIFICATION BY MASS SPECTROMETRY [LARGE SCALE ANALYSIS]</scope>
</reference>
<reference key="19">
    <citation type="journal article" date="1998" name="Nature">
        <title>Crystal structure of the spliceosomal U2B'-U2A' protein complex bound to a fragment of U2 small nuclear RNA.</title>
        <authorList>
            <person name="Price S.R."/>
            <person name="Evans P.R."/>
            <person name="Nagai K."/>
        </authorList>
    </citation>
    <scope>X-RAY CRYSTALLOGRAPHY (2.38 ANGSTROMS) OF 1-176 IN COMPLEX WITH SNRPB2 AND U2 SMALL NUCLEAR RNA</scope>
    <scope>SUBUNIT</scope>
    <scope>FUNCTION</scope>
</reference>
<reference key="20">
    <citation type="journal article" date="2016" name="Proc. Natl. Acad. Sci. U.S.A.">
        <title>Major spliceosome defects cause male infertility and are associated with nonobstructive azoospermia in humans.</title>
        <authorList>
            <person name="Wu H."/>
            <person name="Sun L."/>
            <person name="Wen Y."/>
            <person name="Liu Y."/>
            <person name="Yu J."/>
            <person name="Mao F."/>
            <person name="Wang Y."/>
            <person name="Tong C."/>
            <person name="Guo X."/>
            <person name="Hu Z."/>
            <person name="Sha J."/>
            <person name="Liu M."/>
            <person name="Xia L."/>
        </authorList>
    </citation>
    <scope>FUNCTION</scope>
    <scope>SUBUNIT</scope>
    <scope>MUTAGENESIS OF TYR-15; ARG-27; THR-68; ASN-72; ASN-73; GLU-92 AND GLN-148</scope>
</reference>
<reference evidence="18" key="21">
    <citation type="journal article" date="2017" name="Cell">
        <title>An Atomic Structure of the Human Spliceosome.</title>
        <authorList>
            <person name="Zhang X."/>
            <person name="Yan C."/>
            <person name="Hang J."/>
            <person name="Finci L.I."/>
            <person name="Lei J."/>
            <person name="Shi Y."/>
        </authorList>
    </citation>
    <scope>STRUCTURE BY ELECTRON MICROSCOPY (3.60 ANGSTROMS)</scope>
    <scope>FUNCTION</scope>
    <scope>SUBUNIT</scope>
    <scope>SUBCELLULAR LOCATION</scope>
</reference>
<reference evidence="17" key="22">
    <citation type="journal article" date="2017" name="Cell">
        <title>Cryo-EM Structure of a Pre-catalytic Human Spliceosome Primed for Activation.</title>
        <authorList>
            <person name="Bertram K."/>
            <person name="Agafonov D.E."/>
            <person name="Dybkov O."/>
            <person name="Haselbach D."/>
            <person name="Leelaram M.N."/>
            <person name="Will C.L."/>
            <person name="Urlaub H."/>
            <person name="Kastner B."/>
            <person name="Luhrmann R."/>
            <person name="Stark H."/>
        </authorList>
    </citation>
    <scope>STRUCTURE BY ELECTRON MICROSCOPY (4.50 ANGSTROMS)</scope>
    <scope>FUNCTION</scope>
    <scope>IDENTIFICATION BY MASS SPECTROMETRY</scope>
    <scope>SUBCELLULAR LOCATION</scope>
    <scope>SUBUNIT</scope>
</reference>
<reference evidence="16" key="23">
    <citation type="journal article" date="2017" name="Nature">
        <title>Cryo-EM structure of a human spliceosome activated for step 2 of splicing.</title>
        <authorList>
            <person name="Bertram K."/>
            <person name="Agafonov D.E."/>
            <person name="Liu W.T."/>
            <person name="Dybkov O."/>
            <person name="Will C.L."/>
            <person name="Hartmuth K."/>
            <person name="Urlaub H."/>
            <person name="Kastner B."/>
            <person name="Stark H."/>
            <person name="Luhrmann R."/>
        </authorList>
    </citation>
    <scope>STRUCTURE BY ELECTRON MICROSCOPY (5.90 ANGSTROMS)</scope>
    <scope>FUNCTION</scope>
    <scope>SUBUNIT</scope>
    <scope>SUBCELLULAR LOCATION</scope>
    <scope>IDENTIFICATION BY MASS SPECTROMETRY</scope>
</reference>
<reference evidence="19" key="24">
    <citation type="journal article" date="2020" name="Nature">
        <title>Molecular architecture of the human 17S U2 snRNP.</title>
        <authorList>
            <person name="Zhang Z."/>
            <person name="Will C.L."/>
            <person name="Bertram K."/>
            <person name="Dybkov O."/>
            <person name="Hartmuth K."/>
            <person name="Agafonov D.E."/>
            <person name="Hofele R."/>
            <person name="Urlaub H."/>
            <person name="Kastner B."/>
            <person name="Luehrmann R."/>
            <person name="Stark H."/>
        </authorList>
    </citation>
    <scope>STRUCTURE BY ELECTRON MICROSCOPY (4.10 ANGSTROMS) IN COMPLEX WITH THE 17S U2 SNRNP COMPLEX</scope>
    <scope>FUNCTION</scope>
    <scope>IDENTIFICATION IN THE 17S U2 SNRNP COMPLEX</scope>
</reference>
<reference evidence="20" key="25">
    <citation type="journal article" date="2023" name="Nat. Commun.">
        <title>Mechanisms of the RNA helicases DDX42 and DDX46 in human U2 snRNP assembly.</title>
        <authorList>
            <person name="Yang F."/>
            <person name="Bian T."/>
            <person name="Zhan X."/>
            <person name="Chen Z."/>
            <person name="Xing Z."/>
            <person name="Larsen N.A."/>
            <person name="Zhang X."/>
            <person name="Shi Y."/>
        </authorList>
    </citation>
    <scope>STRUCTURE BY ELECTRON MICROSCOPY (2.70 ANGSTROMS) IN COMPLEX WITH THE 17S U2 SNRNP COMPLEX</scope>
    <scope>IDENTIFICATION IN THE 17S U2 SNRNP COMPLEX</scope>
</reference>
<proteinExistence type="evidence at protein level"/>
<keyword id="KW-0002">3D-structure</keyword>
<keyword id="KW-0007">Acetylation</keyword>
<keyword id="KW-0903">Direct protein sequencing</keyword>
<keyword id="KW-1017">Isopeptide bond</keyword>
<keyword id="KW-0433">Leucine-rich repeat</keyword>
<keyword id="KW-0507">mRNA processing</keyword>
<keyword id="KW-0508">mRNA splicing</keyword>
<keyword id="KW-0539">Nucleus</keyword>
<keyword id="KW-0597">Phosphoprotein</keyword>
<keyword id="KW-1267">Proteomics identification</keyword>
<keyword id="KW-1185">Reference proteome</keyword>
<keyword id="KW-0677">Repeat</keyword>
<keyword id="KW-0687">Ribonucleoprotein</keyword>
<keyword id="KW-0694">RNA-binding</keyword>
<keyword id="KW-0747">Spliceosome</keyword>
<keyword id="KW-0832">Ubl conjugation</keyword>
<sequence>MVKLTAELIEQAAQYTNAVRDRELDLRGYKIPVIENLGATLDQFDAIDFSDNEIRKLDGFPLLRRLKTLLVNNNRICRIGEGLDQALPCLTELILTNNSLVELGDLDPLASLKSLTYLSILRNPVTNKKHYRLYVIYKVPQVRVLDFQKVKLKERQEAEKMFKGKRGAQLAKDIARRSKTFNPGAGLPTDKKKGGPSPGDVEAIKNAIANASTLAEVERLKGLLQSGQIPGRERRSGPTDDGEEEMEEDTVTNGS</sequence>
<dbReference type="EMBL" id="X13482">
    <property type="protein sequence ID" value="CAA31838.1"/>
    <property type="molecule type" value="mRNA"/>
</dbReference>
<dbReference type="EMBL" id="AK312200">
    <property type="protein sequence ID" value="BAG35133.1"/>
    <property type="molecule type" value="mRNA"/>
</dbReference>
<dbReference type="EMBL" id="CH471101">
    <property type="protein sequence ID" value="EAX02300.1"/>
    <property type="molecule type" value="Genomic_DNA"/>
</dbReference>
<dbReference type="EMBL" id="BC022816">
    <property type="protein sequence ID" value="AAH22816.1"/>
    <property type="molecule type" value="mRNA"/>
</dbReference>
<dbReference type="EMBL" id="BC071717">
    <property type="protein sequence ID" value="AAH71717.1"/>
    <property type="molecule type" value="mRNA"/>
</dbReference>
<dbReference type="CCDS" id="CCDS10391.1"/>
<dbReference type="PIR" id="S03616">
    <property type="entry name" value="S03616"/>
</dbReference>
<dbReference type="RefSeq" id="NP_003081.2">
    <property type="nucleotide sequence ID" value="NM_003090.4"/>
</dbReference>
<dbReference type="PDB" id="1A9N">
    <property type="method" value="X-ray"/>
    <property type="resolution" value="2.38 A"/>
    <property type="chains" value="A/C=1-176"/>
</dbReference>
<dbReference type="PDB" id="5MQF">
    <property type="method" value="EM"/>
    <property type="resolution" value="5.90 A"/>
    <property type="chains" value="W=1-255"/>
</dbReference>
<dbReference type="PDB" id="5O9Z">
    <property type="method" value="EM"/>
    <property type="resolution" value="4.50 A"/>
    <property type="chains" value="z=1-255"/>
</dbReference>
<dbReference type="PDB" id="5XJC">
    <property type="method" value="EM"/>
    <property type="resolution" value="3.60 A"/>
    <property type="chains" value="o=1-255"/>
</dbReference>
<dbReference type="PDB" id="5YZG">
    <property type="method" value="EM"/>
    <property type="resolution" value="4.10 A"/>
    <property type="chains" value="o=1-255"/>
</dbReference>
<dbReference type="PDB" id="5Z56">
    <property type="method" value="EM"/>
    <property type="resolution" value="5.10 A"/>
    <property type="chains" value="o=1-255"/>
</dbReference>
<dbReference type="PDB" id="5Z57">
    <property type="method" value="EM"/>
    <property type="resolution" value="6.50 A"/>
    <property type="chains" value="o=1-255"/>
</dbReference>
<dbReference type="PDB" id="5Z58">
    <property type="method" value="EM"/>
    <property type="resolution" value="4.90 A"/>
    <property type="chains" value="o=1-255"/>
</dbReference>
<dbReference type="PDB" id="6AH0">
    <property type="method" value="EM"/>
    <property type="resolution" value="5.70 A"/>
    <property type="chains" value="o=1-255"/>
</dbReference>
<dbReference type="PDB" id="6AHD">
    <property type="method" value="EM"/>
    <property type="resolution" value="3.80 A"/>
    <property type="chains" value="o=1-255"/>
</dbReference>
<dbReference type="PDB" id="6FF7">
    <property type="method" value="EM"/>
    <property type="resolution" value="4.50 A"/>
    <property type="chains" value="W=1-255"/>
</dbReference>
<dbReference type="PDB" id="6ICZ">
    <property type="method" value="EM"/>
    <property type="resolution" value="3.00 A"/>
    <property type="chains" value="o=1-255"/>
</dbReference>
<dbReference type="PDB" id="6ID0">
    <property type="method" value="EM"/>
    <property type="resolution" value="2.90 A"/>
    <property type="chains" value="o=1-255"/>
</dbReference>
<dbReference type="PDB" id="6ID1">
    <property type="method" value="EM"/>
    <property type="resolution" value="2.86 A"/>
    <property type="chains" value="o=1-255"/>
</dbReference>
<dbReference type="PDB" id="6QDV">
    <property type="method" value="EM"/>
    <property type="resolution" value="3.30 A"/>
    <property type="chains" value="W=2-162"/>
</dbReference>
<dbReference type="PDB" id="6QX9">
    <property type="method" value="EM"/>
    <property type="resolution" value="3.28 A"/>
    <property type="chains" value="2A=1-255"/>
</dbReference>
<dbReference type="PDB" id="6Y53">
    <property type="method" value="EM"/>
    <property type="resolution" value="7.10 A"/>
    <property type="chains" value="a=1-255"/>
</dbReference>
<dbReference type="PDB" id="6Y5Q">
    <property type="method" value="EM"/>
    <property type="resolution" value="7.10 A"/>
    <property type="chains" value="a=1-255"/>
</dbReference>
<dbReference type="PDB" id="7A5P">
    <property type="method" value="EM"/>
    <property type="resolution" value="5.00 A"/>
    <property type="chains" value="W=1-255"/>
</dbReference>
<dbReference type="PDB" id="7ABG">
    <property type="method" value="EM"/>
    <property type="resolution" value="7.80 A"/>
    <property type="chains" value="W=1-255"/>
</dbReference>
<dbReference type="PDB" id="7ABI">
    <property type="method" value="EM"/>
    <property type="resolution" value="8.00 A"/>
    <property type="chains" value="W=1-255"/>
</dbReference>
<dbReference type="PDB" id="7EVO">
    <property type="method" value="EM"/>
    <property type="resolution" value="2.50 A"/>
    <property type="chains" value="F=1-255"/>
</dbReference>
<dbReference type="PDB" id="7VPX">
    <property type="method" value="EM"/>
    <property type="resolution" value="3.00 A"/>
    <property type="chains" value="F=1-255"/>
</dbReference>
<dbReference type="PDB" id="7W59">
    <property type="method" value="EM"/>
    <property type="resolution" value="3.60 A"/>
    <property type="chains" value="o=1-255"/>
</dbReference>
<dbReference type="PDB" id="7W5A">
    <property type="method" value="EM"/>
    <property type="resolution" value="3.60 A"/>
    <property type="chains" value="o=1-255"/>
</dbReference>
<dbReference type="PDB" id="7W5B">
    <property type="method" value="EM"/>
    <property type="resolution" value="4.30 A"/>
    <property type="chains" value="o=1-255"/>
</dbReference>
<dbReference type="PDB" id="8C6J">
    <property type="method" value="EM"/>
    <property type="resolution" value="2.80 A"/>
    <property type="chains" value="W=1-255"/>
</dbReference>
<dbReference type="PDB" id="8CH6">
    <property type="method" value="EM"/>
    <property type="resolution" value="5.90 A"/>
    <property type="chains" value="r=1-255"/>
</dbReference>
<dbReference type="PDB" id="8H6E">
    <property type="method" value="EM"/>
    <property type="resolution" value="3.20 A"/>
    <property type="chains" value="2B=1-255"/>
</dbReference>
<dbReference type="PDB" id="8H6J">
    <property type="method" value="EM"/>
    <property type="resolution" value="3.25 A"/>
    <property type="chains" value="2B=1-255"/>
</dbReference>
<dbReference type="PDB" id="8H6K">
    <property type="method" value="EM"/>
    <property type="resolution" value="2.70 A"/>
    <property type="chains" value="2B=1-255"/>
</dbReference>
<dbReference type="PDB" id="8H6L">
    <property type="method" value="EM"/>
    <property type="resolution" value="2.60 A"/>
    <property type="chains" value="2B=1-255"/>
</dbReference>
<dbReference type="PDB" id="8HK1">
    <property type="method" value="EM"/>
    <property type="resolution" value="2.70 A"/>
    <property type="chains" value="F=1-255"/>
</dbReference>
<dbReference type="PDB" id="8I0P">
    <property type="method" value="EM"/>
    <property type="resolution" value="3.40 A"/>
    <property type="chains" value="o=1-255"/>
</dbReference>
<dbReference type="PDB" id="8I0R">
    <property type="method" value="EM"/>
    <property type="resolution" value="3.00 A"/>
    <property type="chains" value="o=1-255"/>
</dbReference>
<dbReference type="PDB" id="8I0S">
    <property type="method" value="EM"/>
    <property type="resolution" value="4.20 A"/>
    <property type="chains" value="o=1-255"/>
</dbReference>
<dbReference type="PDB" id="8I0T">
    <property type="method" value="EM"/>
    <property type="resolution" value="3.00 A"/>
    <property type="chains" value="o=1-255"/>
</dbReference>
<dbReference type="PDB" id="8I0U">
    <property type="method" value="EM"/>
    <property type="resolution" value="3.30 A"/>
    <property type="chains" value="o=1-255"/>
</dbReference>
<dbReference type="PDB" id="8I0V">
    <property type="method" value="EM"/>
    <property type="resolution" value="3.00 A"/>
    <property type="chains" value="o=1-255"/>
</dbReference>
<dbReference type="PDB" id="8I0W">
    <property type="method" value="EM"/>
    <property type="resolution" value="3.40 A"/>
    <property type="chains" value="o=1-255"/>
</dbReference>
<dbReference type="PDB" id="8QO9">
    <property type="method" value="EM"/>
    <property type="resolution" value="5.29 A"/>
    <property type="chains" value="2A=1-255"/>
</dbReference>
<dbReference type="PDB" id="8QXD">
    <property type="method" value="EM"/>
    <property type="resolution" value="9.60 A"/>
    <property type="chains" value="2A=1-255"/>
</dbReference>
<dbReference type="PDB" id="8QZS">
    <property type="method" value="EM"/>
    <property type="resolution" value="4.10 A"/>
    <property type="chains" value="2A=1-255"/>
</dbReference>
<dbReference type="PDB" id="8R08">
    <property type="method" value="EM"/>
    <property type="resolution" value="6.10 A"/>
    <property type="chains" value="2A=1-255"/>
</dbReference>
<dbReference type="PDB" id="8R09">
    <property type="method" value="EM"/>
    <property type="resolution" value="4.30 A"/>
    <property type="chains" value="2A=1-255"/>
</dbReference>
<dbReference type="PDB" id="8R0A">
    <property type="method" value="EM"/>
    <property type="resolution" value="5.80 A"/>
    <property type="chains" value="2A=1-255"/>
</dbReference>
<dbReference type="PDB" id="8R0B">
    <property type="method" value="EM"/>
    <property type="resolution" value="4.40 A"/>
    <property type="chains" value="2A=1-255"/>
</dbReference>
<dbReference type="PDB" id="8RM5">
    <property type="method" value="EM"/>
    <property type="resolution" value="6.90 A"/>
    <property type="chains" value="2A=1-255"/>
</dbReference>
<dbReference type="PDB" id="9FMD">
    <property type="method" value="EM"/>
    <property type="resolution" value="3.30 A"/>
    <property type="chains" value="o=1-255"/>
</dbReference>
<dbReference type="PDBsum" id="1A9N"/>
<dbReference type="PDBsum" id="5MQF"/>
<dbReference type="PDBsum" id="5O9Z"/>
<dbReference type="PDBsum" id="5XJC"/>
<dbReference type="PDBsum" id="5YZG"/>
<dbReference type="PDBsum" id="5Z56"/>
<dbReference type="PDBsum" id="5Z57"/>
<dbReference type="PDBsum" id="5Z58"/>
<dbReference type="PDBsum" id="6AH0"/>
<dbReference type="PDBsum" id="6AHD"/>
<dbReference type="PDBsum" id="6FF7"/>
<dbReference type="PDBsum" id="6ICZ"/>
<dbReference type="PDBsum" id="6ID0"/>
<dbReference type="PDBsum" id="6ID1"/>
<dbReference type="PDBsum" id="6QDV"/>
<dbReference type="PDBsum" id="6QX9"/>
<dbReference type="PDBsum" id="6Y53"/>
<dbReference type="PDBsum" id="6Y5Q"/>
<dbReference type="PDBsum" id="7A5P"/>
<dbReference type="PDBsum" id="7ABG"/>
<dbReference type="PDBsum" id="7ABI"/>
<dbReference type="PDBsum" id="7EVO"/>
<dbReference type="PDBsum" id="7VPX"/>
<dbReference type="PDBsum" id="7W59"/>
<dbReference type="PDBsum" id="7W5A"/>
<dbReference type="PDBsum" id="7W5B"/>
<dbReference type="PDBsum" id="8C6J"/>
<dbReference type="PDBsum" id="8CH6"/>
<dbReference type="PDBsum" id="8H6E"/>
<dbReference type="PDBsum" id="8H6J"/>
<dbReference type="PDBsum" id="8H6K"/>
<dbReference type="PDBsum" id="8H6L"/>
<dbReference type="PDBsum" id="8HK1"/>
<dbReference type="PDBsum" id="8I0P"/>
<dbReference type="PDBsum" id="8I0R"/>
<dbReference type="PDBsum" id="8I0S"/>
<dbReference type="PDBsum" id="8I0T"/>
<dbReference type="PDBsum" id="8I0U"/>
<dbReference type="PDBsum" id="8I0V"/>
<dbReference type="PDBsum" id="8I0W"/>
<dbReference type="PDBsum" id="8QO9"/>
<dbReference type="PDBsum" id="8QXD"/>
<dbReference type="PDBsum" id="8QZS"/>
<dbReference type="PDBsum" id="8R08"/>
<dbReference type="PDBsum" id="8R09"/>
<dbReference type="PDBsum" id="8R0A"/>
<dbReference type="PDBsum" id="8R0B"/>
<dbReference type="PDBsum" id="8RM5"/>
<dbReference type="PDBsum" id="9FMD"/>
<dbReference type="EMDB" id="EMD-10689"/>
<dbReference type="EMDB" id="EMD-11695"/>
<dbReference type="EMDB" id="EMD-11697"/>
<dbReference type="EMDB" id="EMD-16452"/>
<dbReference type="EMDB" id="EMD-16658"/>
<dbReference type="EMDB" id="EMD-18529"/>
<dbReference type="EMDB" id="EMD-18718"/>
<dbReference type="EMDB" id="EMD-18781"/>
<dbReference type="EMDB" id="EMD-18786"/>
<dbReference type="EMDB" id="EMD-18787"/>
<dbReference type="EMDB" id="EMD-18788"/>
<dbReference type="EMDB" id="EMD-18789"/>
<dbReference type="EMDB" id="EMD-19349"/>
<dbReference type="EMDB" id="EMD-31334"/>
<dbReference type="EMDB" id="EMD-32074"/>
<dbReference type="EMDB" id="EMD-32317"/>
<dbReference type="EMDB" id="EMD-32319"/>
<dbReference type="EMDB" id="EMD-32321"/>
<dbReference type="EMDB" id="EMD-34500"/>
<dbReference type="EMDB" id="EMD-34505"/>
<dbReference type="EMDB" id="EMD-34507"/>
<dbReference type="EMDB" id="EMD-34508"/>
<dbReference type="EMDB" id="EMD-34841"/>
<dbReference type="EMDB" id="EMD-35105"/>
<dbReference type="EMDB" id="EMD-35107"/>
<dbReference type="EMDB" id="EMD-35108"/>
<dbReference type="EMDB" id="EMD-35109"/>
<dbReference type="EMDB" id="EMD-35110"/>
<dbReference type="EMDB" id="EMD-35111"/>
<dbReference type="EMDB" id="EMD-35113"/>
<dbReference type="EMDB" id="EMD-3545"/>
<dbReference type="EMDB" id="EMD-3766"/>
<dbReference type="EMDB" id="EMD-4525"/>
<dbReference type="EMDB" id="EMD-4665"/>
<dbReference type="EMDB" id="EMD-6721"/>
<dbReference type="EMDB" id="EMD-6864"/>
<dbReference type="EMDB" id="EMD-6889"/>
<dbReference type="EMDB" id="EMD-6890"/>
<dbReference type="EMDB" id="EMD-6891"/>
<dbReference type="EMDB" id="EMD-9621"/>
<dbReference type="EMDB" id="EMD-9624"/>
<dbReference type="EMDB" id="EMD-9645"/>
<dbReference type="EMDB" id="EMD-9646"/>
<dbReference type="EMDB" id="EMD-9647"/>
<dbReference type="SMR" id="P09661"/>
<dbReference type="BioGRID" id="112511">
    <property type="interactions" value="314"/>
</dbReference>
<dbReference type="ComplexPortal" id="CPX-2539">
    <property type="entry name" value="U2 small nuclear ribonucleoprotein complex"/>
</dbReference>
<dbReference type="CORUM" id="P09661"/>
<dbReference type="DIP" id="DIP-625N"/>
<dbReference type="FunCoup" id="P09661">
    <property type="interactions" value="3818"/>
</dbReference>
<dbReference type="IntAct" id="P09661">
    <property type="interactions" value="138"/>
</dbReference>
<dbReference type="MINT" id="P09661"/>
<dbReference type="STRING" id="9606.ENSP00000254193"/>
<dbReference type="GlyGen" id="P09661">
    <property type="glycosylation" value="3 sites, 1 N-linked glycan (1 site), 1 O-linked glycan (1 site)"/>
</dbReference>
<dbReference type="iPTMnet" id="P09661"/>
<dbReference type="MetOSite" id="P09661"/>
<dbReference type="PhosphoSitePlus" id="P09661"/>
<dbReference type="SwissPalm" id="P09661"/>
<dbReference type="BioMuta" id="SNRPA1"/>
<dbReference type="DMDM" id="31077165"/>
<dbReference type="jPOST" id="P09661"/>
<dbReference type="MassIVE" id="P09661"/>
<dbReference type="PaxDb" id="9606-ENSP00000254193"/>
<dbReference type="PeptideAtlas" id="P09661"/>
<dbReference type="ProteomicsDB" id="52261"/>
<dbReference type="Pumba" id="P09661"/>
<dbReference type="Antibodypedia" id="29301">
    <property type="antibodies" value="119 antibodies from 27 providers"/>
</dbReference>
<dbReference type="DNASU" id="6627"/>
<dbReference type="Ensembl" id="ENST00000254193.11">
    <property type="protein sequence ID" value="ENSP00000254193.6"/>
    <property type="gene ID" value="ENSG00000131876.18"/>
</dbReference>
<dbReference type="GeneID" id="6627"/>
<dbReference type="KEGG" id="hsa:6627"/>
<dbReference type="MANE-Select" id="ENST00000254193.11">
    <property type="protein sequence ID" value="ENSP00000254193.6"/>
    <property type="RefSeq nucleotide sequence ID" value="NM_003090.4"/>
    <property type="RefSeq protein sequence ID" value="NP_003081.2"/>
</dbReference>
<dbReference type="UCSC" id="uc002bww.4">
    <property type="organism name" value="human"/>
</dbReference>
<dbReference type="AGR" id="HGNC:11152"/>
<dbReference type="CTD" id="6627"/>
<dbReference type="DisGeNET" id="6627"/>
<dbReference type="GeneCards" id="SNRPA1"/>
<dbReference type="HGNC" id="HGNC:11152">
    <property type="gene designation" value="SNRPA1"/>
</dbReference>
<dbReference type="HPA" id="ENSG00000131876">
    <property type="expression patterns" value="Low tissue specificity"/>
</dbReference>
<dbReference type="MIM" id="603521">
    <property type="type" value="gene"/>
</dbReference>
<dbReference type="neXtProt" id="NX_P09661"/>
<dbReference type="OpenTargets" id="ENSG00000131876"/>
<dbReference type="PharmGKB" id="PA35994"/>
<dbReference type="VEuPathDB" id="HostDB:ENSG00000131876"/>
<dbReference type="eggNOG" id="KOG1644">
    <property type="taxonomic scope" value="Eukaryota"/>
</dbReference>
<dbReference type="GeneTree" id="ENSGT00940000153289"/>
<dbReference type="HOGENOM" id="CLU_061027_0_1_1"/>
<dbReference type="InParanoid" id="P09661"/>
<dbReference type="OMA" id="PNYREYM"/>
<dbReference type="OrthoDB" id="433501at2759"/>
<dbReference type="PAN-GO" id="P09661">
    <property type="GO annotations" value="3 GO annotations based on evolutionary models"/>
</dbReference>
<dbReference type="PhylomeDB" id="P09661"/>
<dbReference type="TreeFam" id="TF313776"/>
<dbReference type="PathwayCommons" id="P09661"/>
<dbReference type="Reactome" id="R-HSA-72163">
    <property type="pathway name" value="mRNA Splicing - Major Pathway"/>
</dbReference>
<dbReference type="Reactome" id="R-HSA-8950505">
    <property type="pathway name" value="Gene and protein expression by JAK-STAT signaling after Interleukin-12 stimulation"/>
</dbReference>
<dbReference type="SignaLink" id="P09661"/>
<dbReference type="SIGNOR" id="P09661"/>
<dbReference type="BioGRID-ORCS" id="6627">
    <property type="hits" value="815 hits in 1094 CRISPR screens"/>
</dbReference>
<dbReference type="CD-CODE" id="6F24707C">
    <property type="entry name" value="Cajal body"/>
</dbReference>
<dbReference type="CD-CODE" id="804901D1">
    <property type="entry name" value="Nuclear speckle"/>
</dbReference>
<dbReference type="CD-CODE" id="91857CE7">
    <property type="entry name" value="Nucleolus"/>
</dbReference>
<dbReference type="ChiTaRS" id="SNRPA1">
    <property type="organism name" value="human"/>
</dbReference>
<dbReference type="EvolutionaryTrace" id="P09661"/>
<dbReference type="GeneWiki" id="SNRPA1"/>
<dbReference type="GenomeRNAi" id="6627"/>
<dbReference type="Pharos" id="P09661">
    <property type="development level" value="Tbio"/>
</dbReference>
<dbReference type="PRO" id="PR:P09661"/>
<dbReference type="Proteomes" id="UP000005640">
    <property type="component" value="Chromosome 15"/>
</dbReference>
<dbReference type="RNAct" id="P09661">
    <property type="molecule type" value="protein"/>
</dbReference>
<dbReference type="Bgee" id="ENSG00000131876">
    <property type="expression patterns" value="Expressed in left testis and 96 other cell types or tissues"/>
</dbReference>
<dbReference type="ExpressionAtlas" id="P09661">
    <property type="expression patterns" value="baseline and differential"/>
</dbReference>
<dbReference type="GO" id="GO:0071013">
    <property type="term" value="C:catalytic step 2 spliceosome"/>
    <property type="evidence" value="ECO:0000314"/>
    <property type="project" value="UniProtKB"/>
</dbReference>
<dbReference type="GO" id="GO:0016604">
    <property type="term" value="C:nuclear body"/>
    <property type="evidence" value="ECO:0000314"/>
    <property type="project" value="HPA"/>
</dbReference>
<dbReference type="GO" id="GO:0016607">
    <property type="term" value="C:nuclear speck"/>
    <property type="evidence" value="ECO:0000314"/>
    <property type="project" value="HPA"/>
</dbReference>
<dbReference type="GO" id="GO:0005654">
    <property type="term" value="C:nucleoplasm"/>
    <property type="evidence" value="ECO:0000314"/>
    <property type="project" value="HPA"/>
</dbReference>
<dbReference type="GO" id="GO:0005634">
    <property type="term" value="C:nucleus"/>
    <property type="evidence" value="ECO:0000314"/>
    <property type="project" value="UniProtKB"/>
</dbReference>
<dbReference type="GO" id="GO:0030532">
    <property type="term" value="C:small nuclear ribonucleoprotein complex"/>
    <property type="evidence" value="ECO:0000304"/>
    <property type="project" value="ProtInc"/>
</dbReference>
<dbReference type="GO" id="GO:0005681">
    <property type="term" value="C:spliceosomal complex"/>
    <property type="evidence" value="ECO:0000314"/>
    <property type="project" value="HGNC-UCL"/>
</dbReference>
<dbReference type="GO" id="GO:0005686">
    <property type="term" value="C:U2 snRNP"/>
    <property type="evidence" value="ECO:0000318"/>
    <property type="project" value="GO_Central"/>
</dbReference>
<dbReference type="GO" id="GO:0071007">
    <property type="term" value="C:U2-type catalytic step 2 spliceosome"/>
    <property type="evidence" value="ECO:0000314"/>
    <property type="project" value="UniProtKB"/>
</dbReference>
<dbReference type="GO" id="GO:0071005">
    <property type="term" value="C:U2-type precatalytic spliceosome"/>
    <property type="evidence" value="ECO:0000314"/>
    <property type="project" value="UniProtKB"/>
</dbReference>
<dbReference type="GO" id="GO:0005684">
    <property type="term" value="C:U2-type spliceosomal complex"/>
    <property type="evidence" value="ECO:0000314"/>
    <property type="project" value="UniProtKB"/>
</dbReference>
<dbReference type="GO" id="GO:0003723">
    <property type="term" value="F:RNA binding"/>
    <property type="evidence" value="ECO:0007005"/>
    <property type="project" value="UniProtKB"/>
</dbReference>
<dbReference type="GO" id="GO:0030620">
    <property type="term" value="F:U2 snRNA binding"/>
    <property type="evidence" value="ECO:0000318"/>
    <property type="project" value="GO_Central"/>
</dbReference>
<dbReference type="GO" id="GO:0000398">
    <property type="term" value="P:mRNA splicing, via spliceosome"/>
    <property type="evidence" value="ECO:0000314"/>
    <property type="project" value="UniProtKB"/>
</dbReference>
<dbReference type="GO" id="GO:0008380">
    <property type="term" value="P:RNA splicing"/>
    <property type="evidence" value="ECO:0000304"/>
    <property type="project" value="ProtInc"/>
</dbReference>
<dbReference type="GO" id="GO:0007283">
    <property type="term" value="P:spermatogenesis"/>
    <property type="evidence" value="ECO:0000316"/>
    <property type="project" value="UniProtKB"/>
</dbReference>
<dbReference type="GO" id="GO:1903241">
    <property type="term" value="P:U2-type prespliceosome assembly"/>
    <property type="evidence" value="ECO:0000303"/>
    <property type="project" value="ComplexPortal"/>
</dbReference>
<dbReference type="FunFam" id="3.80.10.10:FF:000026">
    <property type="entry name" value="U2 small nuclear ribonucleoprotein A"/>
    <property type="match status" value="1"/>
</dbReference>
<dbReference type="Gene3D" id="3.80.10.10">
    <property type="entry name" value="Ribonuclease Inhibitor"/>
    <property type="match status" value="1"/>
</dbReference>
<dbReference type="InterPro" id="IPR001611">
    <property type="entry name" value="Leu-rich_rpt"/>
</dbReference>
<dbReference type="InterPro" id="IPR032675">
    <property type="entry name" value="LRR_dom_sf"/>
</dbReference>
<dbReference type="InterPro" id="IPR044640">
    <property type="entry name" value="RU2A"/>
</dbReference>
<dbReference type="InterPro" id="IPR003603">
    <property type="entry name" value="U2A'_phosphoprotein32A_C"/>
</dbReference>
<dbReference type="PANTHER" id="PTHR10552">
    <property type="entry name" value="U2 SMALL NUCLEAR RIBONUCLEOPROTEIN A"/>
    <property type="match status" value="1"/>
</dbReference>
<dbReference type="PANTHER" id="PTHR10552:SF6">
    <property type="entry name" value="U2 SMALL NUCLEAR RIBONUCLEOPROTEIN A"/>
    <property type="match status" value="1"/>
</dbReference>
<dbReference type="Pfam" id="PF14580">
    <property type="entry name" value="LRR_9"/>
    <property type="match status" value="1"/>
</dbReference>
<dbReference type="SMART" id="SM00446">
    <property type="entry name" value="LRRcap"/>
    <property type="match status" value="1"/>
</dbReference>
<dbReference type="SUPFAM" id="SSF52058">
    <property type="entry name" value="L domain-like"/>
    <property type="match status" value="1"/>
</dbReference>
<dbReference type="PROSITE" id="PS51450">
    <property type="entry name" value="LRR"/>
    <property type="match status" value="4"/>
</dbReference>